<protein>
    <recommendedName>
        <fullName evidence="1">Small ribosomal subunit protein uS13</fullName>
    </recommendedName>
    <alternativeName>
        <fullName evidence="3">30S ribosomal protein S13</fullName>
    </alternativeName>
</protein>
<reference key="1">
    <citation type="journal article" date="2005" name="Nat. Biotechnol.">
        <title>The complete genome sequence of the meat-borne lactic acid bacterium Lactobacillus sakei 23K.</title>
        <authorList>
            <person name="Chaillou S."/>
            <person name="Champomier-Verges M.-C."/>
            <person name="Cornet M."/>
            <person name="Crutz-Le Coq A.-M."/>
            <person name="Dudez A.-M."/>
            <person name="Martin V."/>
            <person name="Beaufils S."/>
            <person name="Darbon-Rongere E."/>
            <person name="Bossy R."/>
            <person name="Loux V."/>
            <person name="Zagorec M."/>
        </authorList>
    </citation>
    <scope>NUCLEOTIDE SEQUENCE [LARGE SCALE GENOMIC DNA]</scope>
    <source>
        <strain>23K</strain>
    </source>
</reference>
<evidence type="ECO:0000255" key="1">
    <source>
        <dbReference type="HAMAP-Rule" id="MF_01315"/>
    </source>
</evidence>
<evidence type="ECO:0000256" key="2">
    <source>
        <dbReference type="SAM" id="MobiDB-lite"/>
    </source>
</evidence>
<evidence type="ECO:0000305" key="3"/>
<accession>Q38UT5</accession>
<proteinExistence type="inferred from homology"/>
<name>RS13_LATSS</name>
<feature type="chain" id="PRO_0000230518" description="Small ribosomal subunit protein uS13">
    <location>
        <begin position="1"/>
        <end position="121"/>
    </location>
</feature>
<feature type="region of interest" description="Disordered" evidence="2">
    <location>
        <begin position="89"/>
        <end position="121"/>
    </location>
</feature>
<feature type="compositionally biased region" description="Basic residues" evidence="2">
    <location>
        <begin position="106"/>
        <end position="121"/>
    </location>
</feature>
<sequence>MARIAGVDLPRDKQIVIALTYIFGIGNTTAVKVLADAGVPTDVRTRDLTPDQEDKIRAALDTVKVEGDLRREVSLNIKRLQEIGSYRGMRHRRGLPVRGQNTKNNARTRKGKKVSIAGKKK</sequence>
<gene>
    <name evidence="1" type="primary">rpsM</name>
    <name type="ordered locus">LCA_1741</name>
</gene>
<comment type="function">
    <text evidence="1">Located at the top of the head of the 30S subunit, it contacts several helices of the 16S rRNA. In the 70S ribosome it contacts the 23S rRNA (bridge B1a) and protein L5 of the 50S subunit (bridge B1b), connecting the 2 subunits; these bridges are implicated in subunit movement. Contacts the tRNAs in the A and P-sites.</text>
</comment>
<comment type="subunit">
    <text evidence="1">Part of the 30S ribosomal subunit. Forms a loose heterodimer with protein S19. Forms two bridges to the 50S subunit in the 70S ribosome.</text>
</comment>
<comment type="similarity">
    <text evidence="1">Belongs to the universal ribosomal protein uS13 family.</text>
</comment>
<organism>
    <name type="scientific">Latilactobacillus sakei subsp. sakei (strain 23K)</name>
    <name type="common">Lactobacillus sakei subsp. sakei</name>
    <dbReference type="NCBI Taxonomy" id="314315"/>
    <lineage>
        <taxon>Bacteria</taxon>
        <taxon>Bacillati</taxon>
        <taxon>Bacillota</taxon>
        <taxon>Bacilli</taxon>
        <taxon>Lactobacillales</taxon>
        <taxon>Lactobacillaceae</taxon>
        <taxon>Latilactobacillus</taxon>
    </lineage>
</organism>
<dbReference type="EMBL" id="CR936503">
    <property type="protein sequence ID" value="CAI56049.1"/>
    <property type="molecule type" value="Genomic_DNA"/>
</dbReference>
<dbReference type="RefSeq" id="WP_011375432.1">
    <property type="nucleotide sequence ID" value="NC_007576.1"/>
</dbReference>
<dbReference type="SMR" id="Q38UT5"/>
<dbReference type="STRING" id="314315.LCA_1741"/>
<dbReference type="GeneID" id="57132657"/>
<dbReference type="KEGG" id="lsa:LCA_1741"/>
<dbReference type="eggNOG" id="COG0099">
    <property type="taxonomic scope" value="Bacteria"/>
</dbReference>
<dbReference type="HOGENOM" id="CLU_103849_1_1_9"/>
<dbReference type="OrthoDB" id="9803610at2"/>
<dbReference type="Proteomes" id="UP000002707">
    <property type="component" value="Chromosome"/>
</dbReference>
<dbReference type="GO" id="GO:0005829">
    <property type="term" value="C:cytosol"/>
    <property type="evidence" value="ECO:0007669"/>
    <property type="project" value="TreeGrafter"/>
</dbReference>
<dbReference type="GO" id="GO:0015935">
    <property type="term" value="C:small ribosomal subunit"/>
    <property type="evidence" value="ECO:0007669"/>
    <property type="project" value="TreeGrafter"/>
</dbReference>
<dbReference type="GO" id="GO:0019843">
    <property type="term" value="F:rRNA binding"/>
    <property type="evidence" value="ECO:0007669"/>
    <property type="project" value="UniProtKB-UniRule"/>
</dbReference>
<dbReference type="GO" id="GO:0003735">
    <property type="term" value="F:structural constituent of ribosome"/>
    <property type="evidence" value="ECO:0007669"/>
    <property type="project" value="InterPro"/>
</dbReference>
<dbReference type="GO" id="GO:0000049">
    <property type="term" value="F:tRNA binding"/>
    <property type="evidence" value="ECO:0007669"/>
    <property type="project" value="UniProtKB-UniRule"/>
</dbReference>
<dbReference type="GO" id="GO:0006412">
    <property type="term" value="P:translation"/>
    <property type="evidence" value="ECO:0007669"/>
    <property type="project" value="UniProtKB-UniRule"/>
</dbReference>
<dbReference type="FunFam" id="1.10.8.50:FF:000001">
    <property type="entry name" value="30S ribosomal protein S13"/>
    <property type="match status" value="1"/>
</dbReference>
<dbReference type="FunFam" id="4.10.910.10:FF:000001">
    <property type="entry name" value="30S ribosomal protein S13"/>
    <property type="match status" value="1"/>
</dbReference>
<dbReference type="Gene3D" id="1.10.8.50">
    <property type="match status" value="1"/>
</dbReference>
<dbReference type="Gene3D" id="4.10.910.10">
    <property type="entry name" value="30s ribosomal protein s13, domain 2"/>
    <property type="match status" value="1"/>
</dbReference>
<dbReference type="HAMAP" id="MF_01315">
    <property type="entry name" value="Ribosomal_uS13"/>
    <property type="match status" value="1"/>
</dbReference>
<dbReference type="InterPro" id="IPR027437">
    <property type="entry name" value="Rbsml_uS13_C"/>
</dbReference>
<dbReference type="InterPro" id="IPR001892">
    <property type="entry name" value="Ribosomal_uS13"/>
</dbReference>
<dbReference type="InterPro" id="IPR010979">
    <property type="entry name" value="Ribosomal_uS13-like_H2TH"/>
</dbReference>
<dbReference type="InterPro" id="IPR019980">
    <property type="entry name" value="Ribosomal_uS13_bac-type"/>
</dbReference>
<dbReference type="InterPro" id="IPR018269">
    <property type="entry name" value="Ribosomal_uS13_CS"/>
</dbReference>
<dbReference type="NCBIfam" id="TIGR03631">
    <property type="entry name" value="uS13_bact"/>
    <property type="match status" value="1"/>
</dbReference>
<dbReference type="PANTHER" id="PTHR10871">
    <property type="entry name" value="30S RIBOSOMAL PROTEIN S13/40S RIBOSOMAL PROTEIN S18"/>
    <property type="match status" value="1"/>
</dbReference>
<dbReference type="PANTHER" id="PTHR10871:SF1">
    <property type="entry name" value="SMALL RIBOSOMAL SUBUNIT PROTEIN US13M"/>
    <property type="match status" value="1"/>
</dbReference>
<dbReference type="Pfam" id="PF00416">
    <property type="entry name" value="Ribosomal_S13"/>
    <property type="match status" value="1"/>
</dbReference>
<dbReference type="PIRSF" id="PIRSF002134">
    <property type="entry name" value="Ribosomal_S13"/>
    <property type="match status" value="1"/>
</dbReference>
<dbReference type="SUPFAM" id="SSF46946">
    <property type="entry name" value="S13-like H2TH domain"/>
    <property type="match status" value="1"/>
</dbReference>
<dbReference type="PROSITE" id="PS00646">
    <property type="entry name" value="RIBOSOMAL_S13_1"/>
    <property type="match status" value="1"/>
</dbReference>
<dbReference type="PROSITE" id="PS50159">
    <property type="entry name" value="RIBOSOMAL_S13_2"/>
    <property type="match status" value="1"/>
</dbReference>
<keyword id="KW-1185">Reference proteome</keyword>
<keyword id="KW-0687">Ribonucleoprotein</keyword>
<keyword id="KW-0689">Ribosomal protein</keyword>
<keyword id="KW-0694">RNA-binding</keyword>
<keyword id="KW-0699">rRNA-binding</keyword>
<keyword id="KW-0820">tRNA-binding</keyword>